<evidence type="ECO:0000250" key="1"/>
<evidence type="ECO:0000255" key="2">
    <source>
        <dbReference type="PROSITE-ProRule" id="PRU00086"/>
    </source>
</evidence>
<evidence type="ECO:0000256" key="3">
    <source>
        <dbReference type="SAM" id="MobiDB-lite"/>
    </source>
</evidence>
<evidence type="ECO:0000305" key="4"/>
<dbReference type="EMBL" id="BX248357">
    <property type="protein sequence ID" value="CAE49731.1"/>
    <property type="molecule type" value="Genomic_DNA"/>
</dbReference>
<dbReference type="RefSeq" id="WP_010934889.1">
    <property type="nucleotide sequence ID" value="NC_002935.2"/>
</dbReference>
<dbReference type="SMR" id="Q6NHD4"/>
<dbReference type="STRING" id="257309.DIP1204"/>
<dbReference type="GeneID" id="29421405"/>
<dbReference type="KEGG" id="cdi:DIP1204"/>
<dbReference type="HOGENOM" id="CLU_108862_1_0_11"/>
<dbReference type="Proteomes" id="UP000002198">
    <property type="component" value="Chromosome"/>
</dbReference>
<dbReference type="GO" id="GO:0005737">
    <property type="term" value="C:cytoplasm"/>
    <property type="evidence" value="ECO:0007669"/>
    <property type="project" value="UniProtKB-SubCell"/>
</dbReference>
<dbReference type="Gene3D" id="2.60.200.20">
    <property type="match status" value="1"/>
</dbReference>
<dbReference type="InterPro" id="IPR050923">
    <property type="entry name" value="Cell_Proc_Reg/RNA_Proc"/>
</dbReference>
<dbReference type="InterPro" id="IPR000253">
    <property type="entry name" value="FHA_dom"/>
</dbReference>
<dbReference type="InterPro" id="IPR048204">
    <property type="entry name" value="OxygluDhInhib_OdhI"/>
</dbReference>
<dbReference type="InterPro" id="IPR008984">
    <property type="entry name" value="SMAD_FHA_dom_sf"/>
</dbReference>
<dbReference type="NCBIfam" id="NF041660">
    <property type="entry name" value="oxygluDhInhib_OdhI"/>
    <property type="match status" value="1"/>
</dbReference>
<dbReference type="PANTHER" id="PTHR23308">
    <property type="entry name" value="NUCLEAR INHIBITOR OF PROTEIN PHOSPHATASE-1"/>
    <property type="match status" value="1"/>
</dbReference>
<dbReference type="Pfam" id="PF00498">
    <property type="entry name" value="FHA"/>
    <property type="match status" value="1"/>
</dbReference>
<dbReference type="SMART" id="SM00240">
    <property type="entry name" value="FHA"/>
    <property type="match status" value="1"/>
</dbReference>
<dbReference type="SUPFAM" id="SSF49879">
    <property type="entry name" value="SMAD/FHA domain"/>
    <property type="match status" value="1"/>
</dbReference>
<dbReference type="PROSITE" id="PS50006">
    <property type="entry name" value="FHA_DOMAIN"/>
    <property type="match status" value="1"/>
</dbReference>
<reference key="1">
    <citation type="journal article" date="2003" name="Nucleic Acids Res.">
        <title>The complete genome sequence and analysis of Corynebacterium diphtheriae NCTC13129.</title>
        <authorList>
            <person name="Cerdeno-Tarraga A.-M."/>
            <person name="Efstratiou A."/>
            <person name="Dover L.G."/>
            <person name="Holden M.T.G."/>
            <person name="Pallen M.J."/>
            <person name="Bentley S.D."/>
            <person name="Besra G.S."/>
            <person name="Churcher C.M."/>
            <person name="James K.D."/>
            <person name="De Zoysa A."/>
            <person name="Chillingworth T."/>
            <person name="Cronin A."/>
            <person name="Dowd L."/>
            <person name="Feltwell T."/>
            <person name="Hamlin N."/>
            <person name="Holroyd S."/>
            <person name="Jagels K."/>
            <person name="Moule S."/>
            <person name="Quail M.A."/>
            <person name="Rabbinowitsch E."/>
            <person name="Rutherford K.M."/>
            <person name="Thomson N.R."/>
            <person name="Unwin L."/>
            <person name="Whitehead S."/>
            <person name="Barrell B.G."/>
            <person name="Parkhill J."/>
        </authorList>
    </citation>
    <scope>NUCLEOTIDE SEQUENCE [LARGE SCALE GENOMIC DNA]</scope>
    <source>
        <strain>ATCC 700971 / NCTC 13129 / Biotype gravis</strain>
    </source>
</reference>
<organism>
    <name type="scientific">Corynebacterium diphtheriae (strain ATCC 700971 / NCTC 13129 / Biotype gravis)</name>
    <dbReference type="NCBI Taxonomy" id="257309"/>
    <lineage>
        <taxon>Bacteria</taxon>
        <taxon>Bacillati</taxon>
        <taxon>Actinomycetota</taxon>
        <taxon>Actinomycetes</taxon>
        <taxon>Mycobacteriales</taxon>
        <taxon>Corynebacteriaceae</taxon>
        <taxon>Corynebacterium</taxon>
    </lineage>
</organism>
<accession>Q6NHD4</accession>
<proteinExistence type="inferred from homology"/>
<keyword id="KW-0963">Cytoplasm</keyword>
<keyword id="KW-0597">Phosphoprotein</keyword>
<keyword id="KW-1185">Reference proteome</keyword>
<protein>
    <recommendedName>
        <fullName>Oxoglutarate dehydrogenase inhibitor</fullName>
    </recommendedName>
</protein>
<gene>
    <name type="primary">odhI</name>
    <name type="ordered locus">DIP1204</name>
</gene>
<feature type="initiator methionine" description="Removed" evidence="1">
    <location>
        <position position="1"/>
    </location>
</feature>
<feature type="chain" id="PRO_0000272963" description="Oxoglutarate dehydrogenase inhibitor">
    <location>
        <begin position="2"/>
        <end position="143"/>
    </location>
</feature>
<feature type="domain" description="FHA" evidence="2">
    <location>
        <begin position="68"/>
        <end position="117"/>
    </location>
</feature>
<feature type="region of interest" description="Disordered" evidence="3">
    <location>
        <begin position="29"/>
        <end position="50"/>
    </location>
</feature>
<feature type="compositionally biased region" description="Low complexity" evidence="3">
    <location>
        <begin position="29"/>
        <end position="38"/>
    </location>
</feature>
<feature type="modified residue" description="Phosphothreonine" evidence="1">
    <location>
        <position position="14"/>
    </location>
</feature>
<comment type="function">
    <text evidence="1">An essential component of the PknG signaling pathway. When unphosphorylated, it inhibits the activity of 2-oxoglutarate dehydrogenase. When phosphorylated it does not inhibit 2-oxoglutarate dehydrogenase (By similarity).</text>
</comment>
<comment type="subcellular location">
    <subcellularLocation>
        <location evidence="4">Cytoplasm</location>
    </subcellularLocation>
</comment>
<sequence>MSDNTGAPDVQVETTSVFRADLLKEMESGAGAATASGSDVTPPAGAGMLVVKRGPNAGARFLLDRPTTTAGRHPESDIFLDDVTVSRRHAEFRRQDGSFEVVDVGSLNGTYVNREPRNSEVLSSGDEVQIGKFRLVFIEGPRA</sequence>
<name>ODHI_CORDI</name>